<proteinExistence type="inferred from homology"/>
<accession>Q75VW3</accession>
<accession>D3DKI7</accession>
<accession>E3ETU9</accession>
<keyword id="KW-0143">Chaperone</keyword>
<keyword id="KW-0963">Cytoplasm</keyword>
<keyword id="KW-0235">DNA replication</keyword>
<keyword id="KW-0479">Metal-binding</keyword>
<keyword id="KW-1185">Reference proteome</keyword>
<keyword id="KW-0677">Repeat</keyword>
<keyword id="KW-0346">Stress response</keyword>
<keyword id="KW-0862">Zinc</keyword>
<keyword id="KW-0863">Zinc-finger</keyword>
<dbReference type="EMBL" id="AB124582">
    <property type="protein sequence ID" value="BAD17849.1"/>
    <property type="molecule type" value="Genomic_DNA"/>
</dbReference>
<dbReference type="EMBL" id="AP011112">
    <property type="protein sequence ID" value="BAI70339.1"/>
    <property type="molecule type" value="Genomic_DNA"/>
</dbReference>
<dbReference type="EMBL" id="CP002221">
    <property type="protein sequence ID" value="ADO46257.1"/>
    <property type="molecule type" value="Genomic_DNA"/>
</dbReference>
<dbReference type="RefSeq" id="WP_012964519.1">
    <property type="nucleotide sequence ID" value="NC_013799.1"/>
</dbReference>
<dbReference type="SMR" id="Q75VW3"/>
<dbReference type="STRING" id="608538.HTH_1895"/>
<dbReference type="KEGG" id="hte:Hydth_1877"/>
<dbReference type="KEGG" id="hth:HTH_1895"/>
<dbReference type="PATRIC" id="fig|608538.5.peg.1909"/>
<dbReference type="eggNOG" id="COG0484">
    <property type="taxonomic scope" value="Bacteria"/>
</dbReference>
<dbReference type="HOGENOM" id="CLU_017633_0_7_0"/>
<dbReference type="OrthoDB" id="9779889at2"/>
<dbReference type="Proteomes" id="UP000002574">
    <property type="component" value="Chromosome"/>
</dbReference>
<dbReference type="GO" id="GO:0005737">
    <property type="term" value="C:cytoplasm"/>
    <property type="evidence" value="ECO:0007669"/>
    <property type="project" value="UniProtKB-SubCell"/>
</dbReference>
<dbReference type="GO" id="GO:0005524">
    <property type="term" value="F:ATP binding"/>
    <property type="evidence" value="ECO:0007669"/>
    <property type="project" value="InterPro"/>
</dbReference>
<dbReference type="GO" id="GO:0031072">
    <property type="term" value="F:heat shock protein binding"/>
    <property type="evidence" value="ECO:0007669"/>
    <property type="project" value="InterPro"/>
</dbReference>
<dbReference type="GO" id="GO:0051082">
    <property type="term" value="F:unfolded protein binding"/>
    <property type="evidence" value="ECO:0007669"/>
    <property type="project" value="UniProtKB-UniRule"/>
</dbReference>
<dbReference type="GO" id="GO:0008270">
    <property type="term" value="F:zinc ion binding"/>
    <property type="evidence" value="ECO:0007669"/>
    <property type="project" value="UniProtKB-UniRule"/>
</dbReference>
<dbReference type="GO" id="GO:0051085">
    <property type="term" value="P:chaperone cofactor-dependent protein refolding"/>
    <property type="evidence" value="ECO:0007669"/>
    <property type="project" value="TreeGrafter"/>
</dbReference>
<dbReference type="GO" id="GO:0006260">
    <property type="term" value="P:DNA replication"/>
    <property type="evidence" value="ECO:0007669"/>
    <property type="project" value="UniProtKB-KW"/>
</dbReference>
<dbReference type="GO" id="GO:0042026">
    <property type="term" value="P:protein refolding"/>
    <property type="evidence" value="ECO:0007669"/>
    <property type="project" value="TreeGrafter"/>
</dbReference>
<dbReference type="GO" id="GO:0009408">
    <property type="term" value="P:response to heat"/>
    <property type="evidence" value="ECO:0007669"/>
    <property type="project" value="InterPro"/>
</dbReference>
<dbReference type="CDD" id="cd06257">
    <property type="entry name" value="DnaJ"/>
    <property type="match status" value="1"/>
</dbReference>
<dbReference type="CDD" id="cd10747">
    <property type="entry name" value="DnaJ_C"/>
    <property type="match status" value="1"/>
</dbReference>
<dbReference type="CDD" id="cd10719">
    <property type="entry name" value="DnaJ_zf"/>
    <property type="match status" value="1"/>
</dbReference>
<dbReference type="FunFam" id="2.60.260.20:FF:000013">
    <property type="entry name" value="DnaJ subfamily B member 11"/>
    <property type="match status" value="1"/>
</dbReference>
<dbReference type="FunFam" id="2.10.230.10:FF:000002">
    <property type="entry name" value="Molecular chaperone DnaJ"/>
    <property type="match status" value="1"/>
</dbReference>
<dbReference type="Gene3D" id="6.20.20.10">
    <property type="match status" value="2"/>
</dbReference>
<dbReference type="Gene3D" id="1.10.287.110">
    <property type="entry name" value="DnaJ domain"/>
    <property type="match status" value="1"/>
</dbReference>
<dbReference type="Gene3D" id="2.60.260.20">
    <property type="entry name" value="Urease metallochaperone UreE, N-terminal domain"/>
    <property type="match status" value="2"/>
</dbReference>
<dbReference type="HAMAP" id="MF_01152">
    <property type="entry name" value="DnaJ"/>
    <property type="match status" value="1"/>
</dbReference>
<dbReference type="InterPro" id="IPR012724">
    <property type="entry name" value="DnaJ"/>
</dbReference>
<dbReference type="InterPro" id="IPR002939">
    <property type="entry name" value="DnaJ_C"/>
</dbReference>
<dbReference type="InterPro" id="IPR001623">
    <property type="entry name" value="DnaJ_domain"/>
</dbReference>
<dbReference type="InterPro" id="IPR008971">
    <property type="entry name" value="HSP40/DnaJ_pept-bd"/>
</dbReference>
<dbReference type="InterPro" id="IPR001305">
    <property type="entry name" value="HSP_DnaJ_Cys-rich_dom"/>
</dbReference>
<dbReference type="InterPro" id="IPR036410">
    <property type="entry name" value="HSP_DnaJ_Cys-rich_dom_sf"/>
</dbReference>
<dbReference type="InterPro" id="IPR036869">
    <property type="entry name" value="J_dom_sf"/>
</dbReference>
<dbReference type="PANTHER" id="PTHR43096">
    <property type="entry name" value="DNAJ HOMOLOG 1, MITOCHONDRIAL-RELATED"/>
    <property type="match status" value="1"/>
</dbReference>
<dbReference type="PANTHER" id="PTHR43096:SF52">
    <property type="entry name" value="DNAJ HOMOLOG 1, MITOCHONDRIAL-RELATED"/>
    <property type="match status" value="1"/>
</dbReference>
<dbReference type="Pfam" id="PF00226">
    <property type="entry name" value="DnaJ"/>
    <property type="match status" value="1"/>
</dbReference>
<dbReference type="Pfam" id="PF01556">
    <property type="entry name" value="DnaJ_C"/>
    <property type="match status" value="1"/>
</dbReference>
<dbReference type="Pfam" id="PF00684">
    <property type="entry name" value="DnaJ_CXXCXGXG"/>
    <property type="match status" value="1"/>
</dbReference>
<dbReference type="PRINTS" id="PR00625">
    <property type="entry name" value="JDOMAIN"/>
</dbReference>
<dbReference type="SMART" id="SM00271">
    <property type="entry name" value="DnaJ"/>
    <property type="match status" value="1"/>
</dbReference>
<dbReference type="SUPFAM" id="SSF46565">
    <property type="entry name" value="Chaperone J-domain"/>
    <property type="match status" value="1"/>
</dbReference>
<dbReference type="SUPFAM" id="SSF57938">
    <property type="entry name" value="DnaJ/Hsp40 cysteine-rich domain"/>
    <property type="match status" value="1"/>
</dbReference>
<dbReference type="SUPFAM" id="SSF49493">
    <property type="entry name" value="HSP40/DnaJ peptide-binding domain"/>
    <property type="match status" value="2"/>
</dbReference>
<dbReference type="PROSITE" id="PS50076">
    <property type="entry name" value="DNAJ_2"/>
    <property type="match status" value="1"/>
</dbReference>
<dbReference type="PROSITE" id="PS51188">
    <property type="entry name" value="ZF_CR"/>
    <property type="match status" value="1"/>
</dbReference>
<feature type="chain" id="PRO_0000070798" description="Chaperone protein DnaJ">
    <location>
        <begin position="1"/>
        <end position="356"/>
    </location>
</feature>
<feature type="domain" description="J" evidence="1">
    <location>
        <begin position="5"/>
        <end position="69"/>
    </location>
</feature>
<feature type="repeat" description="CXXCXGXG motif">
    <location>
        <begin position="134"/>
        <end position="141"/>
    </location>
</feature>
<feature type="repeat" description="CXXCXGXG motif">
    <location>
        <begin position="151"/>
        <end position="158"/>
    </location>
</feature>
<feature type="repeat" description="CXXCXGXG motif">
    <location>
        <begin position="171"/>
        <end position="178"/>
    </location>
</feature>
<feature type="repeat" description="CXXCXGXG motif">
    <location>
        <begin position="185"/>
        <end position="192"/>
    </location>
</feature>
<feature type="zinc finger region" description="CR-type" evidence="1">
    <location>
        <begin position="121"/>
        <end position="197"/>
    </location>
</feature>
<feature type="binding site" evidence="1">
    <location>
        <position position="134"/>
    </location>
    <ligand>
        <name>Zn(2+)</name>
        <dbReference type="ChEBI" id="CHEBI:29105"/>
        <label>1</label>
    </ligand>
</feature>
<feature type="binding site" evidence="1">
    <location>
        <position position="137"/>
    </location>
    <ligand>
        <name>Zn(2+)</name>
        <dbReference type="ChEBI" id="CHEBI:29105"/>
        <label>1</label>
    </ligand>
</feature>
<feature type="binding site" evidence="1">
    <location>
        <position position="151"/>
    </location>
    <ligand>
        <name>Zn(2+)</name>
        <dbReference type="ChEBI" id="CHEBI:29105"/>
        <label>2</label>
    </ligand>
</feature>
<feature type="binding site" evidence="1">
    <location>
        <position position="154"/>
    </location>
    <ligand>
        <name>Zn(2+)</name>
        <dbReference type="ChEBI" id="CHEBI:29105"/>
        <label>2</label>
    </ligand>
</feature>
<feature type="binding site" evidence="1">
    <location>
        <position position="171"/>
    </location>
    <ligand>
        <name>Zn(2+)</name>
        <dbReference type="ChEBI" id="CHEBI:29105"/>
        <label>2</label>
    </ligand>
</feature>
<feature type="binding site" evidence="1">
    <location>
        <position position="174"/>
    </location>
    <ligand>
        <name>Zn(2+)</name>
        <dbReference type="ChEBI" id="CHEBI:29105"/>
        <label>2</label>
    </ligand>
</feature>
<feature type="binding site" evidence="1">
    <location>
        <position position="185"/>
    </location>
    <ligand>
        <name>Zn(2+)</name>
        <dbReference type="ChEBI" id="CHEBI:29105"/>
        <label>1</label>
    </ligand>
</feature>
<feature type="binding site" evidence="1">
    <location>
        <position position="188"/>
    </location>
    <ligand>
        <name>Zn(2+)</name>
        <dbReference type="ChEBI" id="CHEBI:29105"/>
        <label>1</label>
    </ligand>
</feature>
<sequence>MPIKDYYQILGVSKDATAEEIKKAYRRLAKEYHPDISADENASEKFKEINEAYHILSDEERRKEYDRILKSGDEKSYRDFMEYIQDFLESIWQGMRRSPKPKKGGDVRLKLELTLEEAAFGCEKDIEYERWIDCPTCEGKGYVGKMEKVTCHACEGTGRRVSGIFSFPRPCSVCKGRGFIIKNQCPACSGRGRVAMHSLLRVNVPPGTDEGDVLKVPGKGHTGERGGEAGDLYLRVSLKPHPIFKKVGKDLYMEAFISFPLAVLGGTTKIKTLEGSYQEVFLQPGTECGSTKRLQGLGYPIAGGRGDLIITFRIEVPKNVNSNIRALIEKLAKELGEEGIEYQSGVITKILSLLKL</sequence>
<protein>
    <recommendedName>
        <fullName evidence="1">Chaperone protein DnaJ</fullName>
    </recommendedName>
</protein>
<gene>
    <name evidence="1" type="primary">dnaJ</name>
    <name type="ordered locus">HTH_1895</name>
    <name type="ordered locus">Hydth_1877</name>
</gene>
<organism>
    <name type="scientific">Hydrogenobacter thermophilus (strain DSM 6534 / IAM 12695 / TK-6)</name>
    <dbReference type="NCBI Taxonomy" id="608538"/>
    <lineage>
        <taxon>Bacteria</taxon>
        <taxon>Pseudomonadati</taxon>
        <taxon>Aquificota</taxon>
        <taxon>Aquificia</taxon>
        <taxon>Aquificales</taxon>
        <taxon>Aquificaceae</taxon>
        <taxon>Hydrogenobacter</taxon>
    </lineage>
</organism>
<evidence type="ECO:0000255" key="1">
    <source>
        <dbReference type="HAMAP-Rule" id="MF_01152"/>
    </source>
</evidence>
<comment type="function">
    <text evidence="1">Participates actively in the response to hyperosmotic and heat shock by preventing the aggregation of stress-denatured proteins and by disaggregating proteins, also in an autonomous, DnaK-independent fashion. Unfolded proteins bind initially to DnaJ; upon interaction with the DnaJ-bound protein, DnaK hydrolyzes its bound ATP, resulting in the formation of a stable complex. GrpE releases ADP from DnaK; ATP binding to DnaK triggers the release of the substrate protein, thus completing the reaction cycle. Several rounds of ATP-dependent interactions between DnaJ, DnaK and GrpE are required for fully efficient folding. Also involved, together with DnaK and GrpE, in the DNA replication of plasmids through activation of initiation proteins.</text>
</comment>
<comment type="cofactor">
    <cofactor evidence="1">
        <name>Zn(2+)</name>
        <dbReference type="ChEBI" id="CHEBI:29105"/>
    </cofactor>
    <text evidence="1">Binds 2 Zn(2+) ions per monomer.</text>
</comment>
<comment type="subunit">
    <text evidence="1">Homodimer.</text>
</comment>
<comment type="subcellular location">
    <subcellularLocation>
        <location evidence="1">Cytoplasm</location>
    </subcellularLocation>
</comment>
<comment type="domain">
    <text evidence="1">The J domain is necessary and sufficient to stimulate DnaK ATPase activity. Zinc center 1 plays an important role in the autonomous, DnaK-independent chaperone activity of DnaJ. Zinc center 2 is essential for interaction with DnaK and for DnaJ activity.</text>
</comment>
<comment type="similarity">
    <text evidence="1">Belongs to the DnaJ family.</text>
</comment>
<name>DNAJ_HYDTT</name>
<reference key="1">
    <citation type="journal article" date="2004" name="Mol. Microbiol.">
        <title>A novel enzyme, citryl-CoA synthetase, catalysing the first step of the citrate cleavage reaction in Hydrogenobacter thermophilus TK-6.</title>
        <authorList>
            <person name="Aoshima M."/>
            <person name="Ishii M."/>
            <person name="Igarashi Y."/>
        </authorList>
    </citation>
    <scope>NUCLEOTIDE SEQUENCE [GENOMIC DNA]</scope>
</reference>
<reference key="2">
    <citation type="journal article" date="2010" name="J. Bacteriol.">
        <title>Complete genome sequence of the thermophilic, obligately chemolithoautotrophic hydrogen-oxidizing bacterium Hydrogenobacter thermophilus TK-6.</title>
        <authorList>
            <person name="Arai H."/>
            <person name="Kanbe H."/>
            <person name="Ishii M."/>
            <person name="Igarashi Y."/>
        </authorList>
    </citation>
    <scope>NUCLEOTIDE SEQUENCE [LARGE SCALE GENOMIC DNA]</scope>
    <source>
        <strain>DSM 6534 / IAM 12695 / TK-6</strain>
    </source>
</reference>
<reference key="3">
    <citation type="journal article" date="2011" name="Stand. Genomic Sci.">
        <title>Complete genome sequence of Hydrogenobacter thermophilus type strain (TK-6).</title>
        <authorList>
            <consortium name="US DOE Joint Genome Institute (JGI-PGF)"/>
            <person name="Zeytun A."/>
            <person name="Sikorski J."/>
            <person name="Nolan M."/>
            <person name="Lapidus A."/>
            <person name="Lucas S."/>
            <person name="Han J."/>
            <person name="Tice H."/>
            <person name="Cheng J.F."/>
            <person name="Tapia R."/>
            <person name="Goodwin L."/>
            <person name="Pitluck S."/>
            <person name="Liolios K."/>
            <person name="Ivanova N."/>
            <person name="Mavromatis K."/>
            <person name="Mikhailova N."/>
            <person name="Ovchinnikova G."/>
            <person name="Pati A."/>
            <person name="Chen A."/>
            <person name="Palaniappan K."/>
            <person name="Ngatchou-Djao O.D."/>
            <person name="Land M."/>
            <person name="Hauser L."/>
            <person name="Jeffries C.D."/>
            <person name="Han C."/>
            <person name="Detter J.C."/>
            <person name="Ubler S."/>
            <person name="Rohde M."/>
            <person name="Tindall B.J."/>
            <person name="Goker M."/>
            <person name="Wirth R."/>
            <person name="Woyke T."/>
            <person name="Bristow J."/>
            <person name="Eisen J.A."/>
            <person name="Markowitz V."/>
            <person name="Hugenholtz P."/>
            <person name="Klenk H.P."/>
            <person name="Kyrpides N.C."/>
        </authorList>
    </citation>
    <scope>NUCLEOTIDE SEQUENCE [LARGE SCALE GENOMIC DNA]</scope>
    <source>
        <strain>DSM 6534 / IAM 12695 / TK-6</strain>
    </source>
</reference>